<sequence length="95" mass="10871">MADEKPKEGVKTENNDHINLKVAGQDGSVVQFKIKRHTPLSKLMKAYCERQGLSMRQIRFRFDGQPINETDTPAQLEMEDEDTIDVFQQQTGGVY</sequence>
<proteinExistence type="evidence at protein level"/>
<evidence type="ECO:0000250" key="1"/>
<evidence type="ECO:0000250" key="2">
    <source>
        <dbReference type="UniProtKB" id="P61956"/>
    </source>
</evidence>
<evidence type="ECO:0000255" key="3">
    <source>
        <dbReference type="PROSITE-ProRule" id="PRU00214"/>
    </source>
</evidence>
<evidence type="ECO:0000269" key="4">
    <source>
    </source>
</evidence>
<evidence type="ECO:0000303" key="5">
    <source>
    </source>
</evidence>
<evidence type="ECO:0000305" key="6"/>
<evidence type="ECO:0000312" key="7">
    <source>
        <dbReference type="MGI" id="MGI:2158813"/>
    </source>
</evidence>
<evidence type="ECO:0007744" key="8">
    <source>
    </source>
</evidence>
<evidence type="ECO:0007829" key="9">
    <source>
        <dbReference type="PDB" id="5TVQ"/>
    </source>
</evidence>
<name>SUMO2_MOUSE</name>
<accession>P61957</accession>
<accession>A2A9X2</accession>
<accession>P55855</accession>
<accession>Q542L8</accession>
<feature type="chain" id="PRO_0000035951" description="Small ubiquitin-related modifier 2">
    <location>
        <begin position="1"/>
        <end position="93"/>
    </location>
</feature>
<feature type="propeptide" id="PRO_0000035952" evidence="1">
    <location>
        <begin position="94"/>
        <end position="95"/>
    </location>
</feature>
<feature type="domain" description="Ubiquitin-like" evidence="3">
    <location>
        <begin position="16"/>
        <end position="95"/>
    </location>
</feature>
<feature type="modified residue" description="N6-acetyllysine; alternate" evidence="8">
    <location>
        <position position="11"/>
    </location>
</feature>
<feature type="cross-link" description="Peptide (Met-Gly) (interchain with G-Cter in ubiquitin)" evidence="1">
    <location>
        <position position="1"/>
    </location>
</feature>
<feature type="cross-link" description="Glycyl lysine isopeptide (Lys-Gly) (interchain with G-Cter in SUMO2)" evidence="2">
    <location>
        <position position="5"/>
    </location>
</feature>
<feature type="cross-link" description="Glycyl lysine isopeptide (Lys-Gly) (interchain with G-Cter in SUMO2)" evidence="2">
    <location>
        <position position="7"/>
    </location>
</feature>
<feature type="cross-link" description="Glycyl lysine isopeptide (Lys-Gly) (interchain with G-Cter in SUMO); alternate" evidence="1">
    <location>
        <position position="11"/>
    </location>
</feature>
<feature type="cross-link" description="Glycyl lysine isopeptide (Lys-Gly) (interchain with G-Cter in SUMO1); alternate" evidence="2">
    <location>
        <position position="11"/>
    </location>
</feature>
<feature type="cross-link" description="Glycyl lysine isopeptide (Lys-Gly) (interchain with G-Cter in SUMO2); alternate" evidence="2">
    <location>
        <position position="11"/>
    </location>
</feature>
<feature type="cross-link" description="Glycyl lysine isopeptide (Lys-Gly) (interchain with G-Cter in ubiquitin); alternate" evidence="2">
    <location>
        <position position="11"/>
    </location>
</feature>
<feature type="cross-link" description="Glycyl lysine isopeptide (Lys-Gly) (interchain with G-Cter in SUMO2)" evidence="2">
    <location>
        <position position="21"/>
    </location>
</feature>
<feature type="cross-link" description="Glycyl lysine isopeptide (Gly-Lys) (interchain with K-? in acceptor proteins)" evidence="3">
    <location>
        <position position="93"/>
    </location>
</feature>
<feature type="strand" evidence="9">
    <location>
        <begin position="18"/>
        <end position="24"/>
    </location>
</feature>
<feature type="strand" evidence="9">
    <location>
        <begin position="29"/>
        <end position="34"/>
    </location>
</feature>
<feature type="helix" evidence="9">
    <location>
        <begin position="40"/>
        <end position="51"/>
    </location>
</feature>
<feature type="turn" evidence="9">
    <location>
        <begin position="55"/>
        <end position="57"/>
    </location>
</feature>
<feature type="strand" evidence="9">
    <location>
        <begin position="59"/>
        <end position="62"/>
    </location>
</feature>
<feature type="turn" evidence="9">
    <location>
        <begin position="73"/>
        <end position="77"/>
    </location>
</feature>
<feature type="strand" evidence="9">
    <location>
        <begin position="82"/>
        <end position="87"/>
    </location>
</feature>
<comment type="function">
    <text evidence="2">Ubiquitin-like protein that can be covalently attached to proteins as a monomer or as a lysine-linked polymer. Covalent attachment via an isopeptide bond to its substrates requires prior activation by the E1 complex SAE1-SAE2 and linkage to the E2 enzyme UBE2I, and can be promoted by an E3 ligase such as PIAS1-4, RANBP2 or CBX4. This post-translational modification on lysine residues of proteins plays a crucial role in a number of cellular processes such as nuclear transport, DNA replication and repair, mitosis and signal transduction. Polymeric SUMO2 chains are also susceptible to polyubiquitination which functions as a signal for proteasomal degradation of modified proteins. Plays a role in the regulation of sumoylation status of SETX (By similarity).</text>
</comment>
<comment type="subunit">
    <text evidence="2 4">Interacts with SAE2 and UBE2I. Interacts with ZNF451. Identified in a complex with ZNF451 and UBE2I/UBC9, where one ZNF451 interacts with one UBE2I/UBC9 and two SUMO2 chains, one bound to the UBE2I/UBC9 active site and the other to another region of the same UBE2I/UBC9 molecule. Covalently attached to a number of proteins. Interacts with PELP1. Interacts with USP25; the interaction sumoylates USP25. Interacts with SIMC1, CASP8AP2, RNF111 and SOBP (via SIM domains). Interacts with MTA1. Interacts with HINT1 (PubMed:31088288). Interacts with GCNA (via SIM domains); this interaction allows the GCNA recruitment to DPCs sites (By similarity).</text>
</comment>
<comment type="subcellular location">
    <subcellularLocation>
        <location evidence="1">Nucleus</location>
    </subcellularLocation>
    <subcellularLocation>
        <location evidence="1">Nucleus</location>
        <location evidence="1">PML body</location>
    </subcellularLocation>
</comment>
<comment type="PTM">
    <text evidence="1">Polymeric chains can be formed through Lys-11 cross-linking. Polymeric SUMO2 chains undergo 'Lys-6'-, 'Lys-11'-, 'Lys-48'- and 'Lys-63'-linked polyubiquitination by RNF4 (By similarity).</text>
</comment>
<comment type="PTM">
    <text evidence="1">Cleavage of precursor form by SENP1 or SENP2 is necessary for function.</text>
</comment>
<comment type="PTM">
    <text evidence="1">Monoubiquitinated N-terminally by UBE2W, which primes it for RNF4-dependent polyubiquitination by the UBE2V1-UBE2N heterodimer.</text>
</comment>
<comment type="similarity">
    <text evidence="6">Belongs to the ubiquitin family. SUMO subfamily.</text>
</comment>
<organism>
    <name type="scientific">Mus musculus</name>
    <name type="common">Mouse</name>
    <dbReference type="NCBI Taxonomy" id="10090"/>
    <lineage>
        <taxon>Eukaryota</taxon>
        <taxon>Metazoa</taxon>
        <taxon>Chordata</taxon>
        <taxon>Craniata</taxon>
        <taxon>Vertebrata</taxon>
        <taxon>Euteleostomi</taxon>
        <taxon>Mammalia</taxon>
        <taxon>Eutheria</taxon>
        <taxon>Euarchontoglires</taxon>
        <taxon>Glires</taxon>
        <taxon>Rodentia</taxon>
        <taxon>Myomorpha</taxon>
        <taxon>Muroidea</taxon>
        <taxon>Muridae</taxon>
        <taxon>Murinae</taxon>
        <taxon>Mus</taxon>
        <taxon>Mus</taxon>
    </lineage>
</organism>
<dbReference type="EMBL" id="L79948">
    <property type="protein sequence ID" value="AAL40136.1"/>
    <property type="molecule type" value="mRNA"/>
</dbReference>
<dbReference type="EMBL" id="AK012619">
    <property type="protein sequence ID" value="BAB28360.1"/>
    <property type="molecule type" value="mRNA"/>
</dbReference>
<dbReference type="EMBL" id="AK085238">
    <property type="protein sequence ID" value="BAC39397.1"/>
    <property type="molecule type" value="mRNA"/>
</dbReference>
<dbReference type="EMBL" id="AK132213">
    <property type="protein sequence ID" value="BAE21037.1"/>
    <property type="molecule type" value="mRNA"/>
</dbReference>
<dbReference type="EMBL" id="AK160404">
    <property type="protein sequence ID" value="BAE35772.1"/>
    <property type="molecule type" value="mRNA"/>
</dbReference>
<dbReference type="EMBL" id="AK167308">
    <property type="protein sequence ID" value="BAE39412.1"/>
    <property type="molecule type" value="mRNA"/>
</dbReference>
<dbReference type="EMBL" id="AL645470">
    <property type="status" value="NOT_ANNOTATED_CDS"/>
    <property type="molecule type" value="Genomic_DNA"/>
</dbReference>
<dbReference type="EMBL" id="BC017522">
    <property type="protein sequence ID" value="AAH17522.1"/>
    <property type="molecule type" value="mRNA"/>
</dbReference>
<dbReference type="EMBL" id="BC083326">
    <property type="protein sequence ID" value="AAH83326.1"/>
    <property type="molecule type" value="mRNA"/>
</dbReference>
<dbReference type="EMBL" id="BC095930">
    <property type="protein sequence ID" value="AAH95930.1"/>
    <property type="molecule type" value="mRNA"/>
</dbReference>
<dbReference type="CCDS" id="CCDS36374.1"/>
<dbReference type="RefSeq" id="NP_579932.1">
    <property type="nucleotide sequence ID" value="NM_133354.2"/>
</dbReference>
<dbReference type="PDB" id="5TVP">
    <property type="method" value="X-ray"/>
    <property type="resolution" value="2.40 A"/>
    <property type="chains" value="Q=10-88"/>
</dbReference>
<dbReference type="PDB" id="5TVQ">
    <property type="method" value="X-ray"/>
    <property type="resolution" value="2.35 A"/>
    <property type="chains" value="B=10-93"/>
</dbReference>
<dbReference type="PDBsum" id="5TVP"/>
<dbReference type="PDBsum" id="5TVQ"/>
<dbReference type="BMRB" id="P61957"/>
<dbReference type="SMR" id="P61957"/>
<dbReference type="BioGRID" id="228466">
    <property type="interactions" value="6"/>
</dbReference>
<dbReference type="FunCoup" id="P61957">
    <property type="interactions" value="4304"/>
</dbReference>
<dbReference type="STRING" id="10090.ENSMUSP00000115044"/>
<dbReference type="GlyGen" id="P61957">
    <property type="glycosylation" value="1 site, 1 O-linked glycan (1 site)"/>
</dbReference>
<dbReference type="iPTMnet" id="P61957"/>
<dbReference type="PhosphoSitePlus" id="P61957"/>
<dbReference type="SwissPalm" id="P61957"/>
<dbReference type="jPOST" id="P61957"/>
<dbReference type="PaxDb" id="10090-ENSMUSP00000115044"/>
<dbReference type="PeptideAtlas" id="P61957"/>
<dbReference type="ProteomicsDB" id="258772"/>
<dbReference type="Pumba" id="P61957"/>
<dbReference type="TopDownProteomics" id="P61957"/>
<dbReference type="DNASU" id="170930"/>
<dbReference type="Ensembl" id="ENSMUST00000153892.2">
    <property type="protein sequence ID" value="ENSMUSP00000115044.2"/>
    <property type="gene ID" value="ENSMUSG00000020738.17"/>
</dbReference>
<dbReference type="GeneID" id="170930"/>
<dbReference type="KEGG" id="mmu:170930"/>
<dbReference type="UCSC" id="uc007mhw.1">
    <property type="organism name" value="mouse"/>
</dbReference>
<dbReference type="AGR" id="MGI:2158813"/>
<dbReference type="CTD" id="6613"/>
<dbReference type="MGI" id="MGI:2158813">
    <property type="gene designation" value="Sumo2"/>
</dbReference>
<dbReference type="VEuPathDB" id="HostDB:ENSMUSG00000020738"/>
<dbReference type="eggNOG" id="KOG1769">
    <property type="taxonomic scope" value="Eukaryota"/>
</dbReference>
<dbReference type="GeneTree" id="ENSGT00950000182895"/>
<dbReference type="HOGENOM" id="CLU_148322_2_1_1"/>
<dbReference type="InParanoid" id="P61957"/>
<dbReference type="OMA" id="MKIYCAR"/>
<dbReference type="OrthoDB" id="9925208at2759"/>
<dbReference type="PhylomeDB" id="P61957"/>
<dbReference type="TreeFam" id="TF315116"/>
<dbReference type="Reactome" id="R-MMU-196791">
    <property type="pathway name" value="Vitamin D (calciferol) metabolism"/>
</dbReference>
<dbReference type="Reactome" id="R-MMU-3065679">
    <property type="pathway name" value="SUMO is proteolytically processed"/>
</dbReference>
<dbReference type="Reactome" id="R-MMU-3108214">
    <property type="pathway name" value="SUMOylation of DNA damage response and repair proteins"/>
</dbReference>
<dbReference type="Reactome" id="R-MMU-3232118">
    <property type="pathway name" value="SUMOylation of transcription factors"/>
</dbReference>
<dbReference type="Reactome" id="R-MMU-3899300">
    <property type="pathway name" value="SUMOylation of transcription cofactors"/>
</dbReference>
<dbReference type="Reactome" id="R-MMU-4085377">
    <property type="pathway name" value="SUMOylation of SUMOylation proteins"/>
</dbReference>
<dbReference type="Reactome" id="R-MMU-4090294">
    <property type="pathway name" value="SUMOylation of intracellular receptors"/>
</dbReference>
<dbReference type="Reactome" id="R-MMU-4551638">
    <property type="pathway name" value="SUMOylation of chromatin organization proteins"/>
</dbReference>
<dbReference type="Reactome" id="R-MMU-4570464">
    <property type="pathway name" value="SUMOylation of RNA binding proteins"/>
</dbReference>
<dbReference type="Reactome" id="R-MMU-4615885">
    <property type="pathway name" value="SUMOylation of DNA replication proteins"/>
</dbReference>
<dbReference type="Reactome" id="R-MMU-5693607">
    <property type="pathway name" value="Processing of DNA double-strand break ends"/>
</dbReference>
<dbReference type="Reactome" id="R-MMU-5696395">
    <property type="pathway name" value="Formation of Incision Complex in GG-NER"/>
</dbReference>
<dbReference type="BioGRID-ORCS" id="170930">
    <property type="hits" value="22 hits in 78 CRISPR screens"/>
</dbReference>
<dbReference type="ChiTaRS" id="Sumo2">
    <property type="organism name" value="mouse"/>
</dbReference>
<dbReference type="PRO" id="PR:P61957"/>
<dbReference type="Proteomes" id="UP000000589">
    <property type="component" value="Chromosome 11"/>
</dbReference>
<dbReference type="RNAct" id="P61957">
    <property type="molecule type" value="protein"/>
</dbReference>
<dbReference type="Bgee" id="ENSMUSG00000020738">
    <property type="expression patterns" value="Expressed in embryonic post-anal tail and 78 other cell types or tissues"/>
</dbReference>
<dbReference type="ExpressionAtlas" id="P61957">
    <property type="expression patterns" value="baseline and differential"/>
</dbReference>
<dbReference type="GO" id="GO:0098982">
    <property type="term" value="C:GABA-ergic synapse"/>
    <property type="evidence" value="ECO:0000314"/>
    <property type="project" value="SynGO"/>
</dbReference>
<dbReference type="GO" id="GO:0098978">
    <property type="term" value="C:glutamatergic synapse"/>
    <property type="evidence" value="ECO:0000314"/>
    <property type="project" value="SynGO"/>
</dbReference>
<dbReference type="GO" id="GO:0098686">
    <property type="term" value="C:hippocampal mossy fiber to CA3 synapse"/>
    <property type="evidence" value="ECO:0000314"/>
    <property type="project" value="SynGO"/>
</dbReference>
<dbReference type="GO" id="GO:0005654">
    <property type="term" value="C:nucleoplasm"/>
    <property type="evidence" value="ECO:0000304"/>
    <property type="project" value="Reactome"/>
</dbReference>
<dbReference type="GO" id="GO:0016605">
    <property type="term" value="C:PML body"/>
    <property type="evidence" value="ECO:0000250"/>
    <property type="project" value="UniProtKB"/>
</dbReference>
<dbReference type="GO" id="GO:0098794">
    <property type="term" value="C:postsynapse"/>
    <property type="evidence" value="ECO:0000314"/>
    <property type="project" value="SynGO"/>
</dbReference>
<dbReference type="GO" id="GO:0099524">
    <property type="term" value="C:postsynaptic cytosol"/>
    <property type="evidence" value="ECO:0000314"/>
    <property type="project" value="SynGO"/>
</dbReference>
<dbReference type="GO" id="GO:0098793">
    <property type="term" value="C:presynapse"/>
    <property type="evidence" value="ECO:0000314"/>
    <property type="project" value="SynGO"/>
</dbReference>
<dbReference type="GO" id="GO:0099523">
    <property type="term" value="C:presynaptic cytosol"/>
    <property type="evidence" value="ECO:0000314"/>
    <property type="project" value="SynGO"/>
</dbReference>
<dbReference type="GO" id="GO:0019789">
    <property type="term" value="F:SUMO transferase activity"/>
    <property type="evidence" value="ECO:0000314"/>
    <property type="project" value="MGI"/>
</dbReference>
<dbReference type="GO" id="GO:0031625">
    <property type="term" value="F:ubiquitin protein ligase binding"/>
    <property type="evidence" value="ECO:0000250"/>
    <property type="project" value="UniProtKB"/>
</dbReference>
<dbReference type="GO" id="GO:0032436">
    <property type="term" value="P:positive regulation of proteasomal ubiquitin-dependent protein catabolic process"/>
    <property type="evidence" value="ECO:0007669"/>
    <property type="project" value="Ensembl"/>
</dbReference>
<dbReference type="GO" id="GO:0045944">
    <property type="term" value="P:positive regulation of transcription by RNA polymerase II"/>
    <property type="evidence" value="ECO:0000316"/>
    <property type="project" value="MGI"/>
</dbReference>
<dbReference type="GO" id="GO:0016925">
    <property type="term" value="P:protein sumoylation"/>
    <property type="evidence" value="ECO:0000314"/>
    <property type="project" value="MGI"/>
</dbReference>
<dbReference type="CDD" id="cd16115">
    <property type="entry name" value="Ubl_SUMO2_3_4"/>
    <property type="match status" value="1"/>
</dbReference>
<dbReference type="FunFam" id="3.10.20.90:FF:000482">
    <property type="entry name" value="Small ubiquitin-related modifier 2"/>
    <property type="match status" value="1"/>
</dbReference>
<dbReference type="Gene3D" id="3.10.20.90">
    <property type="entry name" value="Phosphatidylinositol 3-kinase Catalytic Subunit, Chain A, domain 1"/>
    <property type="match status" value="1"/>
</dbReference>
<dbReference type="InterPro" id="IPR022617">
    <property type="entry name" value="Rad60/SUMO-like_dom"/>
</dbReference>
<dbReference type="InterPro" id="IPR000626">
    <property type="entry name" value="Ubiquitin-like_dom"/>
</dbReference>
<dbReference type="InterPro" id="IPR029071">
    <property type="entry name" value="Ubiquitin-like_domsf"/>
</dbReference>
<dbReference type="PANTHER" id="PTHR10562">
    <property type="entry name" value="SMALL UBIQUITIN-RELATED MODIFIER"/>
    <property type="match status" value="1"/>
</dbReference>
<dbReference type="Pfam" id="PF11976">
    <property type="entry name" value="Rad60-SLD"/>
    <property type="match status" value="1"/>
</dbReference>
<dbReference type="SMART" id="SM00213">
    <property type="entry name" value="UBQ"/>
    <property type="match status" value="1"/>
</dbReference>
<dbReference type="SUPFAM" id="SSF54236">
    <property type="entry name" value="Ubiquitin-like"/>
    <property type="match status" value="1"/>
</dbReference>
<dbReference type="PROSITE" id="PS50053">
    <property type="entry name" value="UBIQUITIN_2"/>
    <property type="match status" value="1"/>
</dbReference>
<keyword id="KW-0002">3D-structure</keyword>
<keyword id="KW-0007">Acetylation</keyword>
<keyword id="KW-1017">Isopeptide bond</keyword>
<keyword id="KW-0539">Nucleus</keyword>
<keyword id="KW-1185">Reference proteome</keyword>
<keyword id="KW-0832">Ubl conjugation</keyword>
<keyword id="KW-0833">Ubl conjugation pathway</keyword>
<reference key="1">
    <citation type="journal article" date="1998" name="Biochem. Mol. Biol. Int.">
        <title>Characterization of mouse ubiquitin-like SMT3A and SMT3B cDNAs and gene/pseudogenes.</title>
        <authorList>
            <person name="Chen A."/>
            <person name="Mannen H."/>
            <person name="Li S.S.-L."/>
        </authorList>
    </citation>
    <scope>NUCLEOTIDE SEQUENCE [MRNA]</scope>
    <source>
        <strain>BALB/cJ</strain>
        <tissue>Brain</tissue>
    </source>
</reference>
<reference key="2">
    <citation type="journal article" date="2005" name="Science">
        <title>The transcriptional landscape of the mammalian genome.</title>
        <authorList>
            <person name="Carninci P."/>
            <person name="Kasukawa T."/>
            <person name="Katayama S."/>
            <person name="Gough J."/>
            <person name="Frith M.C."/>
            <person name="Maeda N."/>
            <person name="Oyama R."/>
            <person name="Ravasi T."/>
            <person name="Lenhard B."/>
            <person name="Wells C."/>
            <person name="Kodzius R."/>
            <person name="Shimokawa K."/>
            <person name="Bajic V.B."/>
            <person name="Brenner S.E."/>
            <person name="Batalov S."/>
            <person name="Forrest A.R."/>
            <person name="Zavolan M."/>
            <person name="Davis M.J."/>
            <person name="Wilming L.G."/>
            <person name="Aidinis V."/>
            <person name="Allen J.E."/>
            <person name="Ambesi-Impiombato A."/>
            <person name="Apweiler R."/>
            <person name="Aturaliya R.N."/>
            <person name="Bailey T.L."/>
            <person name="Bansal M."/>
            <person name="Baxter L."/>
            <person name="Beisel K.W."/>
            <person name="Bersano T."/>
            <person name="Bono H."/>
            <person name="Chalk A.M."/>
            <person name="Chiu K.P."/>
            <person name="Choudhary V."/>
            <person name="Christoffels A."/>
            <person name="Clutterbuck D.R."/>
            <person name="Crowe M.L."/>
            <person name="Dalla E."/>
            <person name="Dalrymple B.P."/>
            <person name="de Bono B."/>
            <person name="Della Gatta G."/>
            <person name="di Bernardo D."/>
            <person name="Down T."/>
            <person name="Engstrom P."/>
            <person name="Fagiolini M."/>
            <person name="Faulkner G."/>
            <person name="Fletcher C.F."/>
            <person name="Fukushima T."/>
            <person name="Furuno M."/>
            <person name="Futaki S."/>
            <person name="Gariboldi M."/>
            <person name="Georgii-Hemming P."/>
            <person name="Gingeras T.R."/>
            <person name="Gojobori T."/>
            <person name="Green R.E."/>
            <person name="Gustincich S."/>
            <person name="Harbers M."/>
            <person name="Hayashi Y."/>
            <person name="Hensch T.K."/>
            <person name="Hirokawa N."/>
            <person name="Hill D."/>
            <person name="Huminiecki L."/>
            <person name="Iacono M."/>
            <person name="Ikeo K."/>
            <person name="Iwama A."/>
            <person name="Ishikawa T."/>
            <person name="Jakt M."/>
            <person name="Kanapin A."/>
            <person name="Katoh M."/>
            <person name="Kawasawa Y."/>
            <person name="Kelso J."/>
            <person name="Kitamura H."/>
            <person name="Kitano H."/>
            <person name="Kollias G."/>
            <person name="Krishnan S.P."/>
            <person name="Kruger A."/>
            <person name="Kummerfeld S.K."/>
            <person name="Kurochkin I.V."/>
            <person name="Lareau L.F."/>
            <person name="Lazarevic D."/>
            <person name="Lipovich L."/>
            <person name="Liu J."/>
            <person name="Liuni S."/>
            <person name="McWilliam S."/>
            <person name="Madan Babu M."/>
            <person name="Madera M."/>
            <person name="Marchionni L."/>
            <person name="Matsuda H."/>
            <person name="Matsuzawa S."/>
            <person name="Miki H."/>
            <person name="Mignone F."/>
            <person name="Miyake S."/>
            <person name="Morris K."/>
            <person name="Mottagui-Tabar S."/>
            <person name="Mulder N."/>
            <person name="Nakano N."/>
            <person name="Nakauchi H."/>
            <person name="Ng P."/>
            <person name="Nilsson R."/>
            <person name="Nishiguchi S."/>
            <person name="Nishikawa S."/>
            <person name="Nori F."/>
            <person name="Ohara O."/>
            <person name="Okazaki Y."/>
            <person name="Orlando V."/>
            <person name="Pang K.C."/>
            <person name="Pavan W.J."/>
            <person name="Pavesi G."/>
            <person name="Pesole G."/>
            <person name="Petrovsky N."/>
            <person name="Piazza S."/>
            <person name="Reed J."/>
            <person name="Reid J.F."/>
            <person name="Ring B.Z."/>
            <person name="Ringwald M."/>
            <person name="Rost B."/>
            <person name="Ruan Y."/>
            <person name="Salzberg S.L."/>
            <person name="Sandelin A."/>
            <person name="Schneider C."/>
            <person name="Schoenbach C."/>
            <person name="Sekiguchi K."/>
            <person name="Semple C.A."/>
            <person name="Seno S."/>
            <person name="Sessa L."/>
            <person name="Sheng Y."/>
            <person name="Shibata Y."/>
            <person name="Shimada H."/>
            <person name="Shimada K."/>
            <person name="Silva D."/>
            <person name="Sinclair B."/>
            <person name="Sperling S."/>
            <person name="Stupka E."/>
            <person name="Sugiura K."/>
            <person name="Sultana R."/>
            <person name="Takenaka Y."/>
            <person name="Taki K."/>
            <person name="Tammoja K."/>
            <person name="Tan S.L."/>
            <person name="Tang S."/>
            <person name="Taylor M.S."/>
            <person name="Tegner J."/>
            <person name="Teichmann S.A."/>
            <person name="Ueda H.R."/>
            <person name="van Nimwegen E."/>
            <person name="Verardo R."/>
            <person name="Wei C.L."/>
            <person name="Yagi K."/>
            <person name="Yamanishi H."/>
            <person name="Zabarovsky E."/>
            <person name="Zhu S."/>
            <person name="Zimmer A."/>
            <person name="Hide W."/>
            <person name="Bult C."/>
            <person name="Grimmond S.M."/>
            <person name="Teasdale R.D."/>
            <person name="Liu E.T."/>
            <person name="Brusic V."/>
            <person name="Quackenbush J."/>
            <person name="Wahlestedt C."/>
            <person name="Mattick J.S."/>
            <person name="Hume D.A."/>
            <person name="Kai C."/>
            <person name="Sasaki D."/>
            <person name="Tomaru Y."/>
            <person name="Fukuda S."/>
            <person name="Kanamori-Katayama M."/>
            <person name="Suzuki M."/>
            <person name="Aoki J."/>
            <person name="Arakawa T."/>
            <person name="Iida J."/>
            <person name="Imamura K."/>
            <person name="Itoh M."/>
            <person name="Kato T."/>
            <person name="Kawaji H."/>
            <person name="Kawagashira N."/>
            <person name="Kawashima T."/>
            <person name="Kojima M."/>
            <person name="Kondo S."/>
            <person name="Konno H."/>
            <person name="Nakano K."/>
            <person name="Ninomiya N."/>
            <person name="Nishio T."/>
            <person name="Okada M."/>
            <person name="Plessy C."/>
            <person name="Shibata K."/>
            <person name="Shiraki T."/>
            <person name="Suzuki S."/>
            <person name="Tagami M."/>
            <person name="Waki K."/>
            <person name="Watahiki A."/>
            <person name="Okamura-Oho Y."/>
            <person name="Suzuki H."/>
            <person name="Kawai J."/>
            <person name="Hayashizaki Y."/>
        </authorList>
    </citation>
    <scope>NUCLEOTIDE SEQUENCE [LARGE SCALE MRNA]</scope>
    <source>
        <strain>C57BL/6J</strain>
        <tissue>Cerebellum</tissue>
        <tissue>Embryo</tissue>
        <tissue>Placenta</tissue>
        <tissue>Stomach</tissue>
    </source>
</reference>
<reference key="3">
    <citation type="journal article" date="2009" name="PLoS Biol.">
        <title>Lineage-specific biology revealed by a finished genome assembly of the mouse.</title>
        <authorList>
            <person name="Church D.M."/>
            <person name="Goodstadt L."/>
            <person name="Hillier L.W."/>
            <person name="Zody M.C."/>
            <person name="Goldstein S."/>
            <person name="She X."/>
            <person name="Bult C.J."/>
            <person name="Agarwala R."/>
            <person name="Cherry J.L."/>
            <person name="DiCuccio M."/>
            <person name="Hlavina W."/>
            <person name="Kapustin Y."/>
            <person name="Meric P."/>
            <person name="Maglott D."/>
            <person name="Birtle Z."/>
            <person name="Marques A.C."/>
            <person name="Graves T."/>
            <person name="Zhou S."/>
            <person name="Teague B."/>
            <person name="Potamousis K."/>
            <person name="Churas C."/>
            <person name="Place M."/>
            <person name="Herschleb J."/>
            <person name="Runnheim R."/>
            <person name="Forrest D."/>
            <person name="Amos-Landgraf J."/>
            <person name="Schwartz D.C."/>
            <person name="Cheng Z."/>
            <person name="Lindblad-Toh K."/>
            <person name="Eichler E.E."/>
            <person name="Ponting C.P."/>
        </authorList>
    </citation>
    <scope>NUCLEOTIDE SEQUENCE [LARGE SCALE GENOMIC DNA]</scope>
    <source>
        <strain>C57BL/6J</strain>
    </source>
</reference>
<reference key="4">
    <citation type="journal article" date="2004" name="Genome Res.">
        <title>The status, quality, and expansion of the NIH full-length cDNA project: the Mammalian Gene Collection (MGC).</title>
        <authorList>
            <consortium name="The MGC Project Team"/>
        </authorList>
    </citation>
    <scope>NUCLEOTIDE SEQUENCE [LARGE SCALE MRNA]</scope>
    <source>
        <strain>C57BL/6J</strain>
        <tissue>Brain</tissue>
        <tissue>Eye</tissue>
        <tissue>Mammary tumor</tissue>
    </source>
</reference>
<reference key="5">
    <citation type="journal article" date="2010" name="Cell">
        <title>A tissue-specific atlas of mouse protein phosphorylation and expression.</title>
        <authorList>
            <person name="Huttlin E.L."/>
            <person name="Jedrychowski M.P."/>
            <person name="Elias J.E."/>
            <person name="Goswami T."/>
            <person name="Rad R."/>
            <person name="Beausoleil S.A."/>
            <person name="Villen J."/>
            <person name="Haas W."/>
            <person name="Sowa M.E."/>
            <person name="Gygi S.P."/>
        </authorList>
    </citation>
    <scope>IDENTIFICATION BY MASS SPECTROMETRY [LARGE SCALE ANALYSIS]</scope>
    <source>
        <tissue>Brain</tissue>
        <tissue>Brown adipose tissue</tissue>
        <tissue>Kidney</tissue>
        <tissue>Liver</tissue>
        <tissue>Spleen</tissue>
        <tissue>Testis</tissue>
    </source>
</reference>
<reference key="6">
    <citation type="journal article" date="2013" name="Mol. Cell">
        <title>SIRT5-mediated lysine desuccinylation impacts diverse metabolic pathways.</title>
        <authorList>
            <person name="Park J."/>
            <person name="Chen Y."/>
            <person name="Tishkoff D.X."/>
            <person name="Peng C."/>
            <person name="Tan M."/>
            <person name="Dai L."/>
            <person name="Xie Z."/>
            <person name="Zhang Y."/>
            <person name="Zwaans B.M."/>
            <person name="Skinner M.E."/>
            <person name="Lombard D.B."/>
            <person name="Zhao Y."/>
        </authorList>
    </citation>
    <scope>ACETYLATION [LARGE SCALE ANALYSIS] AT LYS-11</scope>
    <scope>IDENTIFICATION BY MASS SPECTROMETRY [LARGE SCALE ANALYSIS]</scope>
    <source>
        <tissue>Embryonic fibroblast</tissue>
    </source>
</reference>
<reference key="7">
    <citation type="journal article" date="2019" name="Antioxid. Redox Signal.">
        <title>The Axonal Motor Neuropathy-Related HINT1 Protein Is a Zinc- and Calmodulin-Regulated Cysteine SUMO Protease.</title>
        <authorList>
            <person name="Cortes-Montero E."/>
            <person name="Rodriguez-Munoz M."/>
            <person name="Sanchez-Blazquez P."/>
            <person name="Garzon J."/>
        </authorList>
    </citation>
    <scope>INTERACTION WITH HINT1</scope>
</reference>
<gene>
    <name evidence="7" type="primary">Sumo2</name>
    <name evidence="7" type="synonym">Smt3b</name>
    <name evidence="7" type="synonym">Smt3h2</name>
</gene>
<protein>
    <recommendedName>
        <fullName evidence="6">Small ubiquitin-related modifier 2</fullName>
        <shortName evidence="6">SUMO-2</shortName>
    </recommendedName>
    <alternativeName>
        <fullName evidence="7">SMT3 homolog 2</fullName>
    </alternativeName>
    <alternativeName>
        <fullName evidence="5">Ubiquitin-like protein SMT3B</fullName>
        <shortName evidence="5">Smt3B</shortName>
    </alternativeName>
</protein>